<reference key="1">
    <citation type="journal article" date="2011" name="J. Bacteriol.">
        <title>Comparative genomics of 28 Salmonella enterica isolates: evidence for CRISPR-mediated adaptive sublineage evolution.</title>
        <authorList>
            <person name="Fricke W.F."/>
            <person name="Mammel M.K."/>
            <person name="McDermott P.F."/>
            <person name="Tartera C."/>
            <person name="White D.G."/>
            <person name="Leclerc J.E."/>
            <person name="Ravel J."/>
            <person name="Cebula T.A."/>
        </authorList>
    </citation>
    <scope>NUCLEOTIDE SEQUENCE [LARGE SCALE GENOMIC DNA]</scope>
    <source>
        <strain>SL476</strain>
    </source>
</reference>
<organism>
    <name type="scientific">Salmonella heidelberg (strain SL476)</name>
    <dbReference type="NCBI Taxonomy" id="454169"/>
    <lineage>
        <taxon>Bacteria</taxon>
        <taxon>Pseudomonadati</taxon>
        <taxon>Pseudomonadota</taxon>
        <taxon>Gammaproteobacteria</taxon>
        <taxon>Enterobacterales</taxon>
        <taxon>Enterobacteriaceae</taxon>
        <taxon>Salmonella</taxon>
    </lineage>
</organism>
<name>RSMC_SALHS</name>
<gene>
    <name evidence="1" type="primary">rsmC</name>
    <name type="ordered locus">SeHA_C4964</name>
</gene>
<dbReference type="EC" id="2.1.1.172" evidence="1"/>
<dbReference type="EMBL" id="CP001120">
    <property type="protein sequence ID" value="ACF67489.1"/>
    <property type="molecule type" value="Genomic_DNA"/>
</dbReference>
<dbReference type="RefSeq" id="WP_001272268.1">
    <property type="nucleotide sequence ID" value="NC_011083.1"/>
</dbReference>
<dbReference type="SMR" id="B4TGY8"/>
<dbReference type="KEGG" id="seh:SeHA_C4964"/>
<dbReference type="HOGENOM" id="CLU_049581_0_1_6"/>
<dbReference type="Proteomes" id="UP000001866">
    <property type="component" value="Chromosome"/>
</dbReference>
<dbReference type="GO" id="GO:0005737">
    <property type="term" value="C:cytoplasm"/>
    <property type="evidence" value="ECO:0007669"/>
    <property type="project" value="UniProtKB-SubCell"/>
</dbReference>
<dbReference type="GO" id="GO:0052914">
    <property type="term" value="F:16S rRNA (guanine(1207)-N(2))-methyltransferase activity"/>
    <property type="evidence" value="ECO:0007669"/>
    <property type="project" value="UniProtKB-EC"/>
</dbReference>
<dbReference type="GO" id="GO:0003676">
    <property type="term" value="F:nucleic acid binding"/>
    <property type="evidence" value="ECO:0007669"/>
    <property type="project" value="InterPro"/>
</dbReference>
<dbReference type="CDD" id="cd02440">
    <property type="entry name" value="AdoMet_MTases"/>
    <property type="match status" value="1"/>
</dbReference>
<dbReference type="FunFam" id="3.40.50.150:FF:000058">
    <property type="entry name" value="Ribosomal RNA small subunit methyltransferase C"/>
    <property type="match status" value="1"/>
</dbReference>
<dbReference type="Gene3D" id="3.40.50.150">
    <property type="entry name" value="Vaccinia Virus protein VP39"/>
    <property type="match status" value="2"/>
</dbReference>
<dbReference type="HAMAP" id="MF_01862">
    <property type="entry name" value="16SrRNA_methyltr_C"/>
    <property type="match status" value="1"/>
</dbReference>
<dbReference type="InterPro" id="IPR002052">
    <property type="entry name" value="DNA_methylase_N6_adenine_CS"/>
</dbReference>
<dbReference type="InterPro" id="IPR013675">
    <property type="entry name" value="Mtase_sm_N"/>
</dbReference>
<dbReference type="InterPro" id="IPR023543">
    <property type="entry name" value="rRNA_ssu_MeTfrase_C"/>
</dbReference>
<dbReference type="InterPro" id="IPR046977">
    <property type="entry name" value="RsmC/RlmG"/>
</dbReference>
<dbReference type="InterPro" id="IPR029063">
    <property type="entry name" value="SAM-dependent_MTases_sf"/>
</dbReference>
<dbReference type="InterPro" id="IPR007848">
    <property type="entry name" value="Small_mtfrase_dom"/>
</dbReference>
<dbReference type="NCBIfam" id="NF007023">
    <property type="entry name" value="PRK09489.1"/>
    <property type="match status" value="1"/>
</dbReference>
<dbReference type="PANTHER" id="PTHR47816">
    <property type="entry name" value="RIBOSOMAL RNA SMALL SUBUNIT METHYLTRANSFERASE C"/>
    <property type="match status" value="1"/>
</dbReference>
<dbReference type="PANTHER" id="PTHR47816:SF4">
    <property type="entry name" value="RIBOSOMAL RNA SMALL SUBUNIT METHYLTRANSFERASE C"/>
    <property type="match status" value="1"/>
</dbReference>
<dbReference type="Pfam" id="PF05175">
    <property type="entry name" value="MTS"/>
    <property type="match status" value="1"/>
</dbReference>
<dbReference type="Pfam" id="PF08468">
    <property type="entry name" value="MTS_N"/>
    <property type="match status" value="1"/>
</dbReference>
<dbReference type="SUPFAM" id="SSF53335">
    <property type="entry name" value="S-adenosyl-L-methionine-dependent methyltransferases"/>
    <property type="match status" value="1"/>
</dbReference>
<feature type="chain" id="PRO_0000369757" description="Ribosomal RNA small subunit methyltransferase C">
    <location>
        <begin position="1"/>
        <end position="342"/>
    </location>
</feature>
<accession>B4TGY8</accession>
<keyword id="KW-0963">Cytoplasm</keyword>
<keyword id="KW-0489">Methyltransferase</keyword>
<keyword id="KW-0698">rRNA processing</keyword>
<keyword id="KW-0949">S-adenosyl-L-methionine</keyword>
<keyword id="KW-0808">Transferase</keyword>
<sequence>MSAFTPASEVLLRHSDDFEQSRILFAGDLQDDLPARFECAASRAHTQQFHHWQALSRQMGENVRFSLVAQASDVADCDTLIYYWPKNKPEAQFQLMNILSLMPVGVDVFVVGENRSGVRSAEPMLADYAPLNKVDSARRCGLYHGRLEKQPQFSLESWWAEYSIDGLTIKTLPGVFSRDGLDVGSQLLLSTLTPHTKGKVLDVGCGAGVLSAALASHSPKVRLTLCDVSAPAVEASRATLAANGLEGEVFASNVFSEVKGRFDMIISNPPFHDGMQTSLDAAQTLIRGAVRHLNSGGELRIVANAFLPYPKILDETFGFHEVIAQTGRFKVYRTVMTRQAKK</sequence>
<proteinExistence type="inferred from homology"/>
<protein>
    <recommendedName>
        <fullName evidence="1">Ribosomal RNA small subunit methyltransferase C</fullName>
        <ecNumber evidence="1">2.1.1.172</ecNumber>
    </recommendedName>
    <alternativeName>
        <fullName evidence="1">16S rRNA m2G1207 methyltransferase</fullName>
    </alternativeName>
    <alternativeName>
        <fullName evidence="1">rRNA (guanine-N(2)-)-methyltransferase RsmC</fullName>
    </alternativeName>
</protein>
<evidence type="ECO:0000255" key="1">
    <source>
        <dbReference type="HAMAP-Rule" id="MF_01862"/>
    </source>
</evidence>
<comment type="function">
    <text evidence="1">Specifically methylates the guanine in position 1207 of 16S rRNA in the 30S particle.</text>
</comment>
<comment type="catalytic activity">
    <reaction evidence="1">
        <text>guanosine(1207) in 16S rRNA + S-adenosyl-L-methionine = N(2)-methylguanosine(1207) in 16S rRNA + S-adenosyl-L-homocysteine + H(+)</text>
        <dbReference type="Rhea" id="RHEA:42736"/>
        <dbReference type="Rhea" id="RHEA-COMP:10213"/>
        <dbReference type="Rhea" id="RHEA-COMP:10214"/>
        <dbReference type="ChEBI" id="CHEBI:15378"/>
        <dbReference type="ChEBI" id="CHEBI:57856"/>
        <dbReference type="ChEBI" id="CHEBI:59789"/>
        <dbReference type="ChEBI" id="CHEBI:74269"/>
        <dbReference type="ChEBI" id="CHEBI:74481"/>
        <dbReference type="EC" id="2.1.1.172"/>
    </reaction>
</comment>
<comment type="subunit">
    <text evidence="1">Monomer.</text>
</comment>
<comment type="subcellular location">
    <subcellularLocation>
        <location evidence="1">Cytoplasm</location>
    </subcellularLocation>
</comment>
<comment type="similarity">
    <text evidence="1">Belongs to the methyltransferase superfamily. RsmC family.</text>
</comment>